<sequence length="341" mass="37479">MFGLIGHLTSLEQARDVSRRMGYDEYADQGLEFWSSAPPQIVDEITVTSATGKVIHGRYIESCFLPEMLAARRFKTATRKVLNAMSHAQKHGIDISALGGFTSIIFENFDLASLRQVRDTTLEFERFTTGNTHTAYVICRQVEAAAKTLGIDITQATVAVVGATGDIGSAVCRWLDLKLGVGDLILTARNQERLDNLQAELGRGKILPLEAALPEADFIVWVASMPQGVVIDPATLKQPCVLIDGGYPKNLGSKVQGEGIYVLNGGVVEHCFDIDWQIMSAAEMARPERQMFACFAEAMLLEFEGWHTNFSWGRNQITIEKMEAIGEASVRHGFQPLALAI</sequence>
<proteinExistence type="evidence at protein level"/>
<organism>
    <name type="scientific">Synechococcus elongatus (strain ATCC 33912 / PCC 7942 / FACHB-805)</name>
    <name type="common">Anacystis nidulans R2</name>
    <dbReference type="NCBI Taxonomy" id="1140"/>
    <lineage>
        <taxon>Bacteria</taxon>
        <taxon>Bacillati</taxon>
        <taxon>Cyanobacteriota</taxon>
        <taxon>Cyanophyceae</taxon>
        <taxon>Synechococcales</taxon>
        <taxon>Synechococcaceae</taxon>
        <taxon>Synechococcus</taxon>
    </lineage>
</organism>
<evidence type="ECO:0000269" key="1">
    <source>
    </source>
</evidence>
<evidence type="ECO:0000305" key="2"/>
<evidence type="ECO:0007829" key="3">
    <source>
        <dbReference type="PDB" id="6JZQ"/>
    </source>
</evidence>
<evidence type="ECO:0007829" key="4">
    <source>
        <dbReference type="PDB" id="6JZY"/>
    </source>
</evidence>
<evidence type="ECO:0007829" key="5">
    <source>
        <dbReference type="PDB" id="6JZZ"/>
    </source>
</evidence>
<name>AAR_SYNE7</name>
<gene>
    <name type="ordered locus">Synpcc7942_1594</name>
    <name type="ORF">SEC0028</name>
</gene>
<keyword id="KW-0002">3D-structure</keyword>
<keyword id="KW-0520">NAD</keyword>
<keyword id="KW-0560">Oxidoreductase</keyword>
<keyword id="KW-1185">Reference proteome</keyword>
<accession>Q54765</accession>
<dbReference type="EC" id="1.2.1.80"/>
<dbReference type="EMBL" id="U59236">
    <property type="protein sequence ID" value="AAB82039.1"/>
    <property type="molecule type" value="Genomic_DNA"/>
</dbReference>
<dbReference type="EMBL" id="AY120852">
    <property type="protein sequence ID" value="AAM82647.1"/>
    <property type="molecule type" value="Genomic_DNA"/>
</dbReference>
<dbReference type="EMBL" id="CP000100">
    <property type="protein sequence ID" value="ABB57624.1"/>
    <property type="molecule type" value="Genomic_DNA"/>
</dbReference>
<dbReference type="RefSeq" id="WP_011242364.1">
    <property type="nucleotide sequence ID" value="NZ_JACJTX010000004.1"/>
</dbReference>
<dbReference type="PDB" id="6JZQ">
    <property type="method" value="X-ray"/>
    <property type="resolution" value="2.80 A"/>
    <property type="chains" value="A/B/C/D/E=1-341"/>
</dbReference>
<dbReference type="PDB" id="6JZU">
    <property type="method" value="X-ray"/>
    <property type="resolution" value="2.18 A"/>
    <property type="chains" value="A=1-341"/>
</dbReference>
<dbReference type="PDB" id="6JZY">
    <property type="method" value="X-ray"/>
    <property type="resolution" value="2.10 A"/>
    <property type="chains" value="A=1-341"/>
</dbReference>
<dbReference type="PDB" id="6JZZ">
    <property type="method" value="X-ray"/>
    <property type="resolution" value="3.01 A"/>
    <property type="chains" value="A=1-341"/>
</dbReference>
<dbReference type="PDBsum" id="6JZQ"/>
<dbReference type="PDBsum" id="6JZU"/>
<dbReference type="PDBsum" id="6JZY"/>
<dbReference type="PDBsum" id="6JZZ"/>
<dbReference type="SMR" id="Q54765"/>
<dbReference type="STRING" id="1140.Synpcc7942_1594"/>
<dbReference type="PaxDb" id="1140-Synpcc7942_1594"/>
<dbReference type="KEGG" id="syf:Synpcc7942_1594"/>
<dbReference type="eggNOG" id="COG5322">
    <property type="taxonomic scope" value="Bacteria"/>
</dbReference>
<dbReference type="HOGENOM" id="CLU_801341_0_0_3"/>
<dbReference type="OrthoDB" id="417724at2"/>
<dbReference type="BioCyc" id="MetaCyc:SYNPCC7942_1594-MONOMER"/>
<dbReference type="BioCyc" id="SYNEL:SYNPCC7942_1594-MONOMER"/>
<dbReference type="SABIO-RK" id="Q54765"/>
<dbReference type="Proteomes" id="UP000889800">
    <property type="component" value="Chromosome"/>
</dbReference>
<dbReference type="GO" id="GO:0016491">
    <property type="term" value="F:oxidoreductase activity"/>
    <property type="evidence" value="ECO:0007669"/>
    <property type="project" value="UniProtKB-KW"/>
</dbReference>
<dbReference type="Gene3D" id="3.40.50.720">
    <property type="entry name" value="NAD(P)-binding Rossmann-like Domain"/>
    <property type="match status" value="1"/>
</dbReference>
<dbReference type="InterPro" id="IPR016836">
    <property type="entry name" value="AAR"/>
</dbReference>
<dbReference type="InterPro" id="IPR036291">
    <property type="entry name" value="NAD(P)-bd_dom_sf"/>
</dbReference>
<dbReference type="NCBIfam" id="TIGR04058">
    <property type="entry name" value="AcACP_reductase"/>
    <property type="match status" value="1"/>
</dbReference>
<dbReference type="PANTHER" id="PTHR43086:SF3">
    <property type="entry name" value="NADP-DEPENDENT 3-HYDROXY ACID DEHYDROGENASE YDFG"/>
    <property type="match status" value="1"/>
</dbReference>
<dbReference type="PANTHER" id="PTHR43086">
    <property type="entry name" value="VERY-LONG-CHAIN 3-OXOOACYL-COA REDUCTASE"/>
    <property type="match status" value="1"/>
</dbReference>
<dbReference type="PIRSF" id="PIRSF026396">
    <property type="entry name" value="UCP026396_short-chain_DH"/>
    <property type="match status" value="1"/>
</dbReference>
<dbReference type="SUPFAM" id="SSF51735">
    <property type="entry name" value="NAD(P)-binding Rossmann-fold domains"/>
    <property type="match status" value="1"/>
</dbReference>
<protein>
    <recommendedName>
        <fullName>Long-chain acyl-[acyl-carrier-protein] reductase</fullName>
        <shortName>AAR</shortName>
        <shortName>Acyl-ACP reductase</shortName>
        <ecNumber>1.2.1.80</ecNumber>
    </recommendedName>
</protein>
<comment type="function">
    <text evidence="1">Catalyzes the NADP-dependent reduction of long-chain acyl-ACP to the corresponding fatty aldehyde. Involved in the biosynthesis of alkanes, mainly heptadecane and pentadecane, by producing the fatty aldehydes used by aldehyde decarbonylase.</text>
</comment>
<comment type="catalytic activity">
    <reaction evidence="1">
        <text>a long-chain fatty aldehyde + holo-[ACP] + NADP(+) = a long-chain fatty acyl-[ACP] + NADPH + H(+)</text>
        <dbReference type="Rhea" id="RHEA:54176"/>
        <dbReference type="Rhea" id="RHEA-COMP:9685"/>
        <dbReference type="Rhea" id="RHEA-COMP:12682"/>
        <dbReference type="ChEBI" id="CHEBI:15378"/>
        <dbReference type="ChEBI" id="CHEBI:17176"/>
        <dbReference type="ChEBI" id="CHEBI:57783"/>
        <dbReference type="ChEBI" id="CHEBI:58349"/>
        <dbReference type="ChEBI" id="CHEBI:64479"/>
        <dbReference type="ChEBI" id="CHEBI:133243"/>
        <dbReference type="EC" id="1.2.1.80"/>
    </reaction>
</comment>
<comment type="catalytic activity">
    <reaction evidence="1">
        <text>a long-chain fatty aldehyde + holo-[ACP] + NAD(+) = a long-chain fatty acyl-[ACP] + NADH + H(+)</text>
        <dbReference type="Rhea" id="RHEA:54180"/>
        <dbReference type="Rhea" id="RHEA-COMP:9685"/>
        <dbReference type="Rhea" id="RHEA-COMP:12682"/>
        <dbReference type="ChEBI" id="CHEBI:15378"/>
        <dbReference type="ChEBI" id="CHEBI:17176"/>
        <dbReference type="ChEBI" id="CHEBI:57540"/>
        <dbReference type="ChEBI" id="CHEBI:57945"/>
        <dbReference type="ChEBI" id="CHEBI:64479"/>
        <dbReference type="ChEBI" id="CHEBI:133243"/>
        <dbReference type="EC" id="1.2.1.80"/>
    </reaction>
</comment>
<comment type="cofactor">
    <cofactor evidence="1">
        <name>a divalent metal cation</name>
        <dbReference type="ChEBI" id="CHEBI:60240"/>
    </cofactor>
</comment>
<comment type="biophysicochemical properties">
    <kinetics>
        <KM evidence="1">7.9 uM for oleoyl-ACP</KM>
        <KM evidence="1">126 uM for oleoyl-CoA</KM>
    </kinetics>
</comment>
<comment type="similarity">
    <text evidence="2">Belongs to the short-chain dehydrogenases/reductases (SDR) family.</text>
</comment>
<feature type="chain" id="PRO_0000418900" description="Long-chain acyl-[acyl-carrier-protein] reductase">
    <location>
        <begin position="1"/>
        <end position="341"/>
    </location>
</feature>
<feature type="strand" evidence="4">
    <location>
        <begin position="2"/>
        <end position="6"/>
    </location>
</feature>
<feature type="helix" evidence="4">
    <location>
        <begin position="11"/>
        <end position="19"/>
    </location>
</feature>
<feature type="strand" evidence="4">
    <location>
        <begin position="20"/>
        <end position="22"/>
    </location>
</feature>
<feature type="turn" evidence="4">
    <location>
        <begin position="24"/>
        <end position="27"/>
    </location>
</feature>
<feature type="helix" evidence="4">
    <location>
        <begin position="31"/>
        <end position="35"/>
    </location>
</feature>
<feature type="strand" evidence="4">
    <location>
        <begin position="40"/>
        <end position="48"/>
    </location>
</feature>
<feature type="strand" evidence="5">
    <location>
        <begin position="50"/>
        <end position="52"/>
    </location>
</feature>
<feature type="strand" evidence="4">
    <location>
        <begin position="54"/>
        <end position="61"/>
    </location>
</feature>
<feature type="helix" evidence="4">
    <location>
        <begin position="66"/>
        <end position="70"/>
    </location>
</feature>
<feature type="helix" evidence="4">
    <location>
        <begin position="74"/>
        <end position="90"/>
    </location>
</feature>
<feature type="strand" evidence="4">
    <location>
        <begin position="94"/>
        <end position="98"/>
    </location>
</feature>
<feature type="helix" evidence="4">
    <location>
        <begin position="101"/>
        <end position="108"/>
    </location>
</feature>
<feature type="helix" evidence="4">
    <location>
        <begin position="111"/>
        <end position="114"/>
    </location>
</feature>
<feature type="helix" evidence="4">
    <location>
        <begin position="124"/>
        <end position="126"/>
    </location>
</feature>
<feature type="helix" evidence="4">
    <location>
        <begin position="131"/>
        <end position="148"/>
    </location>
</feature>
<feature type="helix" evidence="4">
    <location>
        <begin position="153"/>
        <end position="155"/>
    </location>
</feature>
<feature type="strand" evidence="4">
    <location>
        <begin position="157"/>
        <end position="161"/>
    </location>
</feature>
<feature type="turn" evidence="4">
    <location>
        <begin position="162"/>
        <end position="164"/>
    </location>
</feature>
<feature type="helix" evidence="4">
    <location>
        <begin position="166"/>
        <end position="177"/>
    </location>
</feature>
<feature type="strand" evidence="4">
    <location>
        <begin position="182"/>
        <end position="187"/>
    </location>
</feature>
<feature type="helix" evidence="4">
    <location>
        <begin position="191"/>
        <end position="201"/>
    </location>
</feature>
<feature type="helix" evidence="4">
    <location>
        <begin position="209"/>
        <end position="212"/>
    </location>
</feature>
<feature type="helix" evidence="4">
    <location>
        <begin position="213"/>
        <end position="215"/>
    </location>
</feature>
<feature type="strand" evidence="4">
    <location>
        <begin position="217"/>
        <end position="221"/>
    </location>
</feature>
<feature type="helix" evidence="4">
    <location>
        <begin position="233"/>
        <end position="235"/>
    </location>
</feature>
<feature type="strand" evidence="4">
    <location>
        <begin position="238"/>
        <end position="244"/>
    </location>
</feature>
<feature type="strand" evidence="3">
    <location>
        <begin position="246"/>
        <end position="248"/>
    </location>
</feature>
<feature type="helix" evidence="3">
    <location>
        <begin position="251"/>
        <end position="254"/>
    </location>
</feature>
<feature type="strand" evidence="4">
    <location>
        <begin position="260"/>
        <end position="264"/>
    </location>
</feature>
<feature type="strand" evidence="4">
    <location>
        <begin position="267"/>
        <end position="272"/>
    </location>
</feature>
<feature type="helix" evidence="4">
    <location>
        <begin position="278"/>
        <end position="281"/>
    </location>
</feature>
<feature type="turn" evidence="4">
    <location>
        <begin position="287"/>
        <end position="289"/>
    </location>
</feature>
<feature type="strand" evidence="4">
    <location>
        <begin position="290"/>
        <end position="292"/>
    </location>
</feature>
<feature type="helix" evidence="4">
    <location>
        <begin position="293"/>
        <end position="304"/>
    </location>
</feature>
<feature type="strand" evidence="4">
    <location>
        <begin position="313"/>
        <end position="315"/>
    </location>
</feature>
<feature type="helix" evidence="4">
    <location>
        <begin position="319"/>
        <end position="331"/>
    </location>
</feature>
<feature type="strand" evidence="4">
    <location>
        <begin position="334"/>
        <end position="336"/>
    </location>
</feature>
<reference key="1">
    <citation type="submission" date="1997-10" db="EMBL/GenBank/DDBJ databases">
        <title>Genes encoding the alpha subunit of carboxyltransferase of the acetyl-CoA carboxylase complex and GTP cyclohydrolase I from cyanobacterium Synechococcus sp. PCC 7942.</title>
        <authorList>
            <person name="Phung L.T."/>
            <person name="Haselkorn R."/>
        </authorList>
    </citation>
    <scope>NUCLEOTIDE SEQUENCE [GENOMIC DNA]</scope>
    <source>
        <strain>ATCC 33912 / PCC 7942 / FACHB-805</strain>
    </source>
</reference>
<reference key="2">
    <citation type="submission" date="2002-06" db="EMBL/GenBank/DDBJ databases">
        <title>Synechococcus elongatus PCC7942 cosmid 6C3.</title>
        <authorList>
            <person name="Holtman C.K."/>
            <person name="Sandoval P."/>
            <person name="Chen Y."/>
            <person name="Socias T."/>
            <person name="Mohler B.J."/>
            <person name="Gonzalez A."/>
            <person name="Salinas I."/>
            <person name="McMurtry S."/>
            <person name="Golden S.S."/>
            <person name="Youderian P."/>
        </authorList>
    </citation>
    <scope>NUCLEOTIDE SEQUENCE [GENOMIC DNA]</scope>
    <source>
        <strain>ATCC 33912 / PCC 7942 / FACHB-805</strain>
    </source>
</reference>
<reference key="3">
    <citation type="submission" date="2005-08" db="EMBL/GenBank/DDBJ databases">
        <title>Complete sequence of chromosome 1 of Synechococcus elongatus PCC 7942.</title>
        <authorList>
            <consortium name="US DOE Joint Genome Institute"/>
            <person name="Copeland A."/>
            <person name="Lucas S."/>
            <person name="Lapidus A."/>
            <person name="Barry K."/>
            <person name="Detter J.C."/>
            <person name="Glavina T."/>
            <person name="Hammon N."/>
            <person name="Israni S."/>
            <person name="Pitluck S."/>
            <person name="Schmutz J."/>
            <person name="Larimer F."/>
            <person name="Land M."/>
            <person name="Kyrpides N."/>
            <person name="Lykidis A."/>
            <person name="Golden S."/>
            <person name="Richardson P."/>
        </authorList>
    </citation>
    <scope>NUCLEOTIDE SEQUENCE [LARGE SCALE GENOMIC DNA]</scope>
    <source>
        <strain>ATCC 33912 / PCC 7942 / FACHB-805</strain>
    </source>
</reference>
<reference key="4">
    <citation type="journal article" date="2010" name="Science">
        <title>Microbial biosynthesis of alkanes.</title>
        <authorList>
            <person name="Schirmer A."/>
            <person name="Rude M.A."/>
            <person name="Li X."/>
            <person name="Popova E."/>
            <person name="del Cardayre S.B."/>
        </authorList>
    </citation>
    <scope>FUNCTION</scope>
    <scope>CATALYTIC ACTIVITY</scope>
    <scope>COFACTOR</scope>
    <scope>BIOPHYSICOCHEMICAL PROPERTIES</scope>
</reference>